<dbReference type="EC" id="2.7.7.6" evidence="1"/>
<dbReference type="EMBL" id="CP000117">
    <property type="protein sequence ID" value="ABA23806.1"/>
    <property type="molecule type" value="Genomic_DNA"/>
</dbReference>
<dbReference type="SMR" id="Q3M5D0"/>
<dbReference type="STRING" id="240292.Ava_4207"/>
<dbReference type="KEGG" id="ava:Ava_4207"/>
<dbReference type="eggNOG" id="COG0085">
    <property type="taxonomic scope" value="Bacteria"/>
</dbReference>
<dbReference type="HOGENOM" id="CLU_000524_4_3_3"/>
<dbReference type="Proteomes" id="UP000002533">
    <property type="component" value="Chromosome"/>
</dbReference>
<dbReference type="GO" id="GO:0000428">
    <property type="term" value="C:DNA-directed RNA polymerase complex"/>
    <property type="evidence" value="ECO:0007669"/>
    <property type="project" value="UniProtKB-KW"/>
</dbReference>
<dbReference type="GO" id="GO:0003677">
    <property type="term" value="F:DNA binding"/>
    <property type="evidence" value="ECO:0007669"/>
    <property type="project" value="UniProtKB-UniRule"/>
</dbReference>
<dbReference type="GO" id="GO:0003899">
    <property type="term" value="F:DNA-directed RNA polymerase activity"/>
    <property type="evidence" value="ECO:0007669"/>
    <property type="project" value="UniProtKB-UniRule"/>
</dbReference>
<dbReference type="GO" id="GO:0032549">
    <property type="term" value="F:ribonucleoside binding"/>
    <property type="evidence" value="ECO:0007669"/>
    <property type="project" value="InterPro"/>
</dbReference>
<dbReference type="GO" id="GO:0006351">
    <property type="term" value="P:DNA-templated transcription"/>
    <property type="evidence" value="ECO:0007669"/>
    <property type="project" value="UniProtKB-UniRule"/>
</dbReference>
<dbReference type="CDD" id="cd00653">
    <property type="entry name" value="RNA_pol_B_RPB2"/>
    <property type="match status" value="1"/>
</dbReference>
<dbReference type="FunFam" id="3.90.1800.10:FF:000001">
    <property type="entry name" value="DNA-directed RNA polymerase subunit beta"/>
    <property type="match status" value="1"/>
</dbReference>
<dbReference type="Gene3D" id="2.40.50.100">
    <property type="match status" value="1"/>
</dbReference>
<dbReference type="Gene3D" id="2.40.50.150">
    <property type="match status" value="1"/>
</dbReference>
<dbReference type="Gene3D" id="3.90.1100.10">
    <property type="match status" value="1"/>
</dbReference>
<dbReference type="Gene3D" id="2.30.150.10">
    <property type="entry name" value="DNA-directed RNA polymerase, beta subunit, external 1 domain"/>
    <property type="match status" value="1"/>
</dbReference>
<dbReference type="Gene3D" id="2.40.270.10">
    <property type="entry name" value="DNA-directed RNA polymerase, subunit 2, domain 6"/>
    <property type="match status" value="1"/>
</dbReference>
<dbReference type="Gene3D" id="3.90.1800.10">
    <property type="entry name" value="RNA polymerase alpha subunit dimerisation domain"/>
    <property type="match status" value="1"/>
</dbReference>
<dbReference type="Gene3D" id="3.90.1110.10">
    <property type="entry name" value="RNA polymerase Rpb2, domain 2"/>
    <property type="match status" value="1"/>
</dbReference>
<dbReference type="HAMAP" id="MF_01321">
    <property type="entry name" value="RNApol_bact_RpoB"/>
    <property type="match status" value="1"/>
</dbReference>
<dbReference type="InterPro" id="IPR042107">
    <property type="entry name" value="DNA-dir_RNA_pol_bsu_ext_1_sf"/>
</dbReference>
<dbReference type="InterPro" id="IPR019462">
    <property type="entry name" value="DNA-dir_RNA_pol_bsu_external_1"/>
</dbReference>
<dbReference type="InterPro" id="IPR015712">
    <property type="entry name" value="DNA-dir_RNA_pol_su2"/>
</dbReference>
<dbReference type="InterPro" id="IPR007120">
    <property type="entry name" value="DNA-dir_RNAP_su2_dom"/>
</dbReference>
<dbReference type="InterPro" id="IPR037033">
    <property type="entry name" value="DNA-dir_RNAP_su2_hyb_sf"/>
</dbReference>
<dbReference type="InterPro" id="IPR010243">
    <property type="entry name" value="RNA_pol_bsu_bac"/>
</dbReference>
<dbReference type="InterPro" id="IPR007121">
    <property type="entry name" value="RNA_pol_bsu_CS"/>
</dbReference>
<dbReference type="InterPro" id="IPR007644">
    <property type="entry name" value="RNA_pol_bsu_protrusion"/>
</dbReference>
<dbReference type="InterPro" id="IPR007642">
    <property type="entry name" value="RNA_pol_Rpb2_2"/>
</dbReference>
<dbReference type="InterPro" id="IPR037034">
    <property type="entry name" value="RNA_pol_Rpb2_2_sf"/>
</dbReference>
<dbReference type="InterPro" id="IPR007645">
    <property type="entry name" value="RNA_pol_Rpb2_3"/>
</dbReference>
<dbReference type="InterPro" id="IPR007641">
    <property type="entry name" value="RNA_pol_Rpb2_7"/>
</dbReference>
<dbReference type="InterPro" id="IPR014724">
    <property type="entry name" value="RNA_pol_RPB2_OB-fold"/>
</dbReference>
<dbReference type="NCBIfam" id="NF001616">
    <property type="entry name" value="PRK00405.1"/>
    <property type="match status" value="1"/>
</dbReference>
<dbReference type="NCBIfam" id="TIGR02013">
    <property type="entry name" value="rpoB"/>
    <property type="match status" value="1"/>
</dbReference>
<dbReference type="PANTHER" id="PTHR20856">
    <property type="entry name" value="DNA-DIRECTED RNA POLYMERASE I SUBUNIT 2"/>
    <property type="match status" value="1"/>
</dbReference>
<dbReference type="Pfam" id="PF04563">
    <property type="entry name" value="RNA_pol_Rpb2_1"/>
    <property type="match status" value="1"/>
</dbReference>
<dbReference type="Pfam" id="PF04561">
    <property type="entry name" value="RNA_pol_Rpb2_2"/>
    <property type="match status" value="1"/>
</dbReference>
<dbReference type="Pfam" id="PF04565">
    <property type="entry name" value="RNA_pol_Rpb2_3"/>
    <property type="match status" value="1"/>
</dbReference>
<dbReference type="Pfam" id="PF10385">
    <property type="entry name" value="RNA_pol_Rpb2_45"/>
    <property type="match status" value="1"/>
</dbReference>
<dbReference type="Pfam" id="PF00562">
    <property type="entry name" value="RNA_pol_Rpb2_6"/>
    <property type="match status" value="1"/>
</dbReference>
<dbReference type="Pfam" id="PF04560">
    <property type="entry name" value="RNA_pol_Rpb2_7"/>
    <property type="match status" value="1"/>
</dbReference>
<dbReference type="SUPFAM" id="SSF64484">
    <property type="entry name" value="beta and beta-prime subunits of DNA dependent RNA-polymerase"/>
    <property type="match status" value="1"/>
</dbReference>
<dbReference type="PROSITE" id="PS01166">
    <property type="entry name" value="RNA_POL_BETA"/>
    <property type="match status" value="1"/>
</dbReference>
<name>RPOB_TRIV2</name>
<comment type="function">
    <text evidence="1">DNA-dependent RNA polymerase catalyzes the transcription of DNA into RNA using the four ribonucleoside triphosphates as substrates.</text>
</comment>
<comment type="catalytic activity">
    <reaction evidence="1">
        <text>RNA(n) + a ribonucleoside 5'-triphosphate = RNA(n+1) + diphosphate</text>
        <dbReference type="Rhea" id="RHEA:21248"/>
        <dbReference type="Rhea" id="RHEA-COMP:14527"/>
        <dbReference type="Rhea" id="RHEA-COMP:17342"/>
        <dbReference type="ChEBI" id="CHEBI:33019"/>
        <dbReference type="ChEBI" id="CHEBI:61557"/>
        <dbReference type="ChEBI" id="CHEBI:140395"/>
        <dbReference type="EC" id="2.7.7.6"/>
    </reaction>
</comment>
<comment type="subunit">
    <text evidence="1">In cyanobacteria the RNAP catalytic core is composed of 2 alpha, 1 beta, 1 beta', 1 gamma and 1 omega subunit. When a sigma factor is associated with the core the holoenzyme is formed, which can initiate transcription.</text>
</comment>
<comment type="similarity">
    <text evidence="1">Belongs to the RNA polymerase beta chain family.</text>
</comment>
<accession>Q3M5D0</accession>
<organism>
    <name type="scientific">Trichormus variabilis (strain ATCC 29413 / PCC 7937)</name>
    <name type="common">Anabaena variabilis</name>
    <dbReference type="NCBI Taxonomy" id="240292"/>
    <lineage>
        <taxon>Bacteria</taxon>
        <taxon>Bacillati</taxon>
        <taxon>Cyanobacteriota</taxon>
        <taxon>Cyanophyceae</taxon>
        <taxon>Nostocales</taxon>
        <taxon>Nostocaceae</taxon>
        <taxon>Trichormus</taxon>
    </lineage>
</organism>
<sequence>MISENYIEPAFLLPDLIEIQRSSFRWFLEEGLIEELNSFSPITDYTGKLELHFLGHNYKLKEPKYSVEEAKRRDSTYAVQMYVPTRLLNKETGDIKEQEVFIGDLPLMTDRGTFIINGAERVIVNQIVRSPGVYYKSEIDKNGRRTYSASLIPNRGAWLKFETDRNDLVWVRIDKTRKLSAQVLLKALGLSDNEIFDALRHPEYFQKTIEKEGQFSEEEALMELYRKLRPGEPPTVLGGQQLLDSRFFDPKRYDLGRVGRYKLNKKLRLSVPDTVRVLTSGDILAAVDYLINLEYDIGSIDDIDHLGNRRVRSVGELLQNQVRVGLNRLERIIRERMTVSDAEVLTPASLVNPKPLVAAIKEFFGSSQLSQFMDQTNPLAELTHKRRLSALGPGGLTRERAGFAVRDIHPSHYGRICPIETPEGPNAGLIGSLATHARVNQYGFLETPFRPVENGRVRFDQPAVYMTADEEDDLRVAPGDIPVDENGHIIGPQVPVRYRQEFSTTTPEQVDYVAVSPVQIVSVATSMIPFLEHDDANRALMGSNMQRQAVPLLKPERPLVGTGLEAQGARDSGMVIVSRTDGDVVYVDATEIRVRVSGQLPAASGKSTDNGQLTSQKGQEIRYTVSKYQRSNQDTCLNQKPLVRIGERVVAGQVLADGSSTEGGELALGQNIVVAYMPWEGYNYEDAILISERLVQDDIYTSIHIEKYEIEARQTKLGPEEITREIPNVGEDALRQLDEQGIIRIGAWVEAGDILVGKVTPKGESDQPPEEKLLRAIFGEKARDVRDNSLRVPNGEKGRVVDVRLFTREQGDELPPGANMVVRVYVAQKRKIQVGDKMAGRHGNKGIISRILPIEDMPYLPDGSPVDIVLNPLGVPSRMNVGQVFECLLGWAGHTLGVRFKITPFDEMYGEESSRRIVHGKLQEARDETGKDWVYNPDDPGKIMVFDGRTGEPFDRPVTIGVAYMLKLVHLVDDKIHARSTGPYSLVTQQPLGGKAQQGGQRFGEMEVWALEAFGAAYTLQELLTVKSDDMQGRNEALNAIVKGKAIPRPGTPESFKVLMRELQSLGLDIAVHKVETQADGSSLDVEVDLMADQLARRTPPRPTYESLSRESLDDDE</sequence>
<proteinExistence type="inferred from homology"/>
<keyword id="KW-0240">DNA-directed RNA polymerase</keyword>
<keyword id="KW-0548">Nucleotidyltransferase</keyword>
<keyword id="KW-0804">Transcription</keyword>
<keyword id="KW-0808">Transferase</keyword>
<evidence type="ECO:0000255" key="1">
    <source>
        <dbReference type="HAMAP-Rule" id="MF_01321"/>
    </source>
</evidence>
<evidence type="ECO:0000256" key="2">
    <source>
        <dbReference type="SAM" id="MobiDB-lite"/>
    </source>
</evidence>
<protein>
    <recommendedName>
        <fullName evidence="1">DNA-directed RNA polymerase subunit beta</fullName>
        <shortName evidence="1">RNAP subunit beta</shortName>
        <ecNumber evidence="1">2.7.7.6</ecNumber>
    </recommendedName>
    <alternativeName>
        <fullName evidence="1">RNA polymerase subunit beta</fullName>
    </alternativeName>
    <alternativeName>
        <fullName evidence="1">Transcriptase subunit beta</fullName>
    </alternativeName>
</protein>
<feature type="chain" id="PRO_0000237294" description="DNA-directed RNA polymerase subunit beta">
    <location>
        <begin position="1"/>
        <end position="1117"/>
    </location>
</feature>
<feature type="region of interest" description="Disordered" evidence="2">
    <location>
        <begin position="1094"/>
        <end position="1117"/>
    </location>
</feature>
<feature type="compositionally biased region" description="Basic and acidic residues" evidence="2">
    <location>
        <begin position="1108"/>
        <end position="1117"/>
    </location>
</feature>
<reference key="1">
    <citation type="journal article" date="2014" name="Stand. Genomic Sci.">
        <title>Complete genome sequence of Anabaena variabilis ATCC 29413.</title>
        <authorList>
            <person name="Thiel T."/>
            <person name="Pratte B.S."/>
            <person name="Zhong J."/>
            <person name="Goodwin L."/>
            <person name="Copeland A."/>
            <person name="Lucas S."/>
            <person name="Han C."/>
            <person name="Pitluck S."/>
            <person name="Land M.L."/>
            <person name="Kyrpides N.C."/>
            <person name="Woyke T."/>
        </authorList>
    </citation>
    <scope>NUCLEOTIDE SEQUENCE [LARGE SCALE GENOMIC DNA]</scope>
    <source>
        <strain>ATCC 29413 / PCC 7937</strain>
    </source>
</reference>
<gene>
    <name evidence="1" type="primary">rpoB</name>
    <name type="ordered locus">Ava_4207</name>
</gene>